<keyword id="KW-0378">Hydrolase</keyword>
<keyword id="KW-0460">Magnesium</keyword>
<organism>
    <name type="scientific">Salmonella paratyphi B (strain ATCC BAA-1250 / SPB7)</name>
    <dbReference type="NCBI Taxonomy" id="1016998"/>
    <lineage>
        <taxon>Bacteria</taxon>
        <taxon>Pseudomonadati</taxon>
        <taxon>Pseudomonadota</taxon>
        <taxon>Gammaproteobacteria</taxon>
        <taxon>Enterobacterales</taxon>
        <taxon>Enterobacteriaceae</taxon>
        <taxon>Salmonella</taxon>
    </lineage>
</organism>
<name>NUDI_SALPB</name>
<reference key="1">
    <citation type="submission" date="2007-11" db="EMBL/GenBank/DDBJ databases">
        <authorList>
            <consortium name="The Salmonella enterica serovar Paratyphi B Genome Sequencing Project"/>
            <person name="McClelland M."/>
            <person name="Sanderson E.K."/>
            <person name="Porwollik S."/>
            <person name="Spieth J."/>
            <person name="Clifton W.S."/>
            <person name="Fulton R."/>
            <person name="Cordes M."/>
            <person name="Wollam A."/>
            <person name="Shah N."/>
            <person name="Pepin K."/>
            <person name="Bhonagiri V."/>
            <person name="Nash W."/>
            <person name="Johnson M."/>
            <person name="Thiruvilangam P."/>
            <person name="Wilson R."/>
        </authorList>
    </citation>
    <scope>NUCLEOTIDE SEQUENCE [LARGE SCALE GENOMIC DNA]</scope>
    <source>
        <strain>ATCC BAA-1250 / SPB7</strain>
    </source>
</reference>
<proteinExistence type="inferred from homology"/>
<gene>
    <name evidence="1" type="primary">nudI</name>
    <name type="ordered locus">SPAB_00687</name>
</gene>
<evidence type="ECO:0000255" key="1">
    <source>
        <dbReference type="HAMAP-Rule" id="MF_01846"/>
    </source>
</evidence>
<comment type="function">
    <text evidence="1">Catalyzes the hydrolysis of nucleoside triphosphates, with a preference for pyrimidine deoxynucleoside triphosphates (dUTP, dTTP and dCTP).</text>
</comment>
<comment type="catalytic activity">
    <reaction evidence="1">
        <text>a ribonucleoside 5'-triphosphate + H2O = a ribonucleoside 5'-phosphate + diphosphate + H(+)</text>
        <dbReference type="Rhea" id="RHEA:23996"/>
        <dbReference type="ChEBI" id="CHEBI:15377"/>
        <dbReference type="ChEBI" id="CHEBI:15378"/>
        <dbReference type="ChEBI" id="CHEBI:33019"/>
        <dbReference type="ChEBI" id="CHEBI:58043"/>
        <dbReference type="ChEBI" id="CHEBI:61557"/>
        <dbReference type="EC" id="3.6.1.9"/>
    </reaction>
</comment>
<comment type="catalytic activity">
    <reaction evidence="1">
        <text>a 2'-deoxyribonucleoside 5'-triphosphate + H2O = a 2'-deoxyribonucleoside 5'-phosphate + diphosphate + H(+)</text>
        <dbReference type="Rhea" id="RHEA:44644"/>
        <dbReference type="ChEBI" id="CHEBI:15377"/>
        <dbReference type="ChEBI" id="CHEBI:15378"/>
        <dbReference type="ChEBI" id="CHEBI:33019"/>
        <dbReference type="ChEBI" id="CHEBI:61560"/>
        <dbReference type="ChEBI" id="CHEBI:65317"/>
        <dbReference type="EC" id="3.6.1.9"/>
    </reaction>
</comment>
<comment type="catalytic activity">
    <reaction evidence="1">
        <text>dUTP + H2O = dUMP + diphosphate + H(+)</text>
        <dbReference type="Rhea" id="RHEA:10248"/>
        <dbReference type="ChEBI" id="CHEBI:15377"/>
        <dbReference type="ChEBI" id="CHEBI:15378"/>
        <dbReference type="ChEBI" id="CHEBI:33019"/>
        <dbReference type="ChEBI" id="CHEBI:61555"/>
        <dbReference type="ChEBI" id="CHEBI:246422"/>
        <dbReference type="EC" id="3.6.1.9"/>
    </reaction>
</comment>
<comment type="catalytic activity">
    <reaction evidence="1">
        <text>dUTP + H2O = dUMP + diphosphate + H(+)</text>
        <dbReference type="Rhea" id="RHEA:10248"/>
        <dbReference type="ChEBI" id="CHEBI:15377"/>
        <dbReference type="ChEBI" id="CHEBI:15378"/>
        <dbReference type="ChEBI" id="CHEBI:33019"/>
        <dbReference type="ChEBI" id="CHEBI:61555"/>
        <dbReference type="ChEBI" id="CHEBI:246422"/>
        <dbReference type="EC" id="3.6.1.23"/>
    </reaction>
</comment>
<comment type="catalytic activity">
    <reaction evidence="1">
        <text>dTTP + H2O = dTMP + diphosphate + H(+)</text>
        <dbReference type="Rhea" id="RHEA:28534"/>
        <dbReference type="ChEBI" id="CHEBI:15377"/>
        <dbReference type="ChEBI" id="CHEBI:15378"/>
        <dbReference type="ChEBI" id="CHEBI:33019"/>
        <dbReference type="ChEBI" id="CHEBI:37568"/>
        <dbReference type="ChEBI" id="CHEBI:63528"/>
        <dbReference type="EC" id="3.6.1.9"/>
    </reaction>
</comment>
<comment type="catalytic activity">
    <reaction evidence="1">
        <text>dCTP + H2O = dCMP + diphosphate + H(+)</text>
        <dbReference type="Rhea" id="RHEA:22636"/>
        <dbReference type="ChEBI" id="CHEBI:15377"/>
        <dbReference type="ChEBI" id="CHEBI:15378"/>
        <dbReference type="ChEBI" id="CHEBI:33019"/>
        <dbReference type="ChEBI" id="CHEBI:57566"/>
        <dbReference type="ChEBI" id="CHEBI:61481"/>
        <dbReference type="EC" id="3.6.1.9"/>
    </reaction>
</comment>
<comment type="catalytic activity">
    <reaction evidence="1">
        <text>dCTP + H2O = dCMP + diphosphate + H(+)</text>
        <dbReference type="Rhea" id="RHEA:22636"/>
        <dbReference type="ChEBI" id="CHEBI:15377"/>
        <dbReference type="ChEBI" id="CHEBI:15378"/>
        <dbReference type="ChEBI" id="CHEBI:33019"/>
        <dbReference type="ChEBI" id="CHEBI:57566"/>
        <dbReference type="ChEBI" id="CHEBI:61481"/>
        <dbReference type="EC" id="3.6.1.12"/>
    </reaction>
</comment>
<comment type="cofactor">
    <cofactor evidence="1">
        <name>Mg(2+)</name>
        <dbReference type="ChEBI" id="CHEBI:18420"/>
    </cofactor>
</comment>
<comment type="subunit">
    <text evidence="1">Monomer.</text>
</comment>
<comment type="similarity">
    <text evidence="1">Belongs to the Nudix hydrolase family. NudI subfamily.</text>
</comment>
<accession>A9N5B7</accession>
<feature type="chain" id="PRO_0000342138" description="Nucleoside triphosphatase NudI">
    <location>
        <begin position="1"/>
        <end position="141"/>
    </location>
</feature>
<feature type="domain" description="Nudix hydrolase" evidence="1">
    <location>
        <begin position="1"/>
        <end position="141"/>
    </location>
</feature>
<feature type="short sequence motif" description="Nudix box">
    <location>
        <begin position="38"/>
        <end position="59"/>
    </location>
</feature>
<dbReference type="EC" id="3.6.1.9" evidence="1"/>
<dbReference type="EC" id="3.6.1.12" evidence="1"/>
<dbReference type="EC" id="3.6.1.-" evidence="1"/>
<dbReference type="EC" id="3.6.1.23" evidence="1"/>
<dbReference type="EMBL" id="CP000886">
    <property type="protein sequence ID" value="ABX66113.1"/>
    <property type="molecule type" value="Genomic_DNA"/>
</dbReference>
<dbReference type="RefSeq" id="WP_001249900.1">
    <property type="nucleotide sequence ID" value="NC_010102.1"/>
</dbReference>
<dbReference type="SMR" id="A9N5B7"/>
<dbReference type="KEGG" id="spq:SPAB_00687"/>
<dbReference type="PATRIC" id="fig|1016998.12.peg.647"/>
<dbReference type="HOGENOM" id="CLU_037162_31_0_6"/>
<dbReference type="BioCyc" id="SENT1016998:SPAB_RS02860-MONOMER"/>
<dbReference type="Proteomes" id="UP000008556">
    <property type="component" value="Chromosome"/>
</dbReference>
<dbReference type="GO" id="GO:0047840">
    <property type="term" value="F:dCTP diphosphatase activity"/>
    <property type="evidence" value="ECO:0007669"/>
    <property type="project" value="UniProtKB-EC"/>
</dbReference>
<dbReference type="GO" id="GO:0036218">
    <property type="term" value="F:dTTP diphosphatase activity"/>
    <property type="evidence" value="ECO:0007669"/>
    <property type="project" value="RHEA"/>
</dbReference>
<dbReference type="GO" id="GO:0004170">
    <property type="term" value="F:dUTP diphosphatase activity"/>
    <property type="evidence" value="ECO:0007669"/>
    <property type="project" value="UniProtKB-EC"/>
</dbReference>
<dbReference type="GO" id="GO:0000287">
    <property type="term" value="F:magnesium ion binding"/>
    <property type="evidence" value="ECO:0007669"/>
    <property type="project" value="UniProtKB-UniRule"/>
</dbReference>
<dbReference type="CDD" id="cd04696">
    <property type="entry name" value="NUDIX_NudI"/>
    <property type="match status" value="1"/>
</dbReference>
<dbReference type="Gene3D" id="3.90.79.10">
    <property type="entry name" value="Nucleoside Triphosphate Pyrophosphohydrolase"/>
    <property type="match status" value="1"/>
</dbReference>
<dbReference type="HAMAP" id="MF_01846">
    <property type="entry name" value="Nudix_NudI"/>
    <property type="match status" value="1"/>
</dbReference>
<dbReference type="InterPro" id="IPR023781">
    <property type="entry name" value="Nucleoside_triphosphatase_NudI"/>
</dbReference>
<dbReference type="InterPro" id="IPR020476">
    <property type="entry name" value="Nudix_hydrolase"/>
</dbReference>
<dbReference type="InterPro" id="IPR015797">
    <property type="entry name" value="NUDIX_hydrolase-like_dom_sf"/>
</dbReference>
<dbReference type="InterPro" id="IPR020084">
    <property type="entry name" value="NUDIX_hydrolase_CS"/>
</dbReference>
<dbReference type="InterPro" id="IPR000086">
    <property type="entry name" value="NUDIX_hydrolase_dom"/>
</dbReference>
<dbReference type="NCBIfam" id="NF012016">
    <property type="entry name" value="PRK15472.1"/>
    <property type="match status" value="1"/>
</dbReference>
<dbReference type="PANTHER" id="PTHR43046">
    <property type="entry name" value="GDP-MANNOSE MANNOSYL HYDROLASE"/>
    <property type="match status" value="1"/>
</dbReference>
<dbReference type="PANTHER" id="PTHR43046:SF14">
    <property type="entry name" value="MUTT_NUDIX FAMILY PROTEIN"/>
    <property type="match status" value="1"/>
</dbReference>
<dbReference type="Pfam" id="PF00293">
    <property type="entry name" value="NUDIX"/>
    <property type="match status" value="1"/>
</dbReference>
<dbReference type="PRINTS" id="PR00502">
    <property type="entry name" value="NUDIXFAMILY"/>
</dbReference>
<dbReference type="SUPFAM" id="SSF55811">
    <property type="entry name" value="Nudix"/>
    <property type="match status" value="1"/>
</dbReference>
<dbReference type="PROSITE" id="PS51462">
    <property type="entry name" value="NUDIX"/>
    <property type="match status" value="1"/>
</dbReference>
<dbReference type="PROSITE" id="PS00893">
    <property type="entry name" value="NUDIX_BOX"/>
    <property type="match status" value="1"/>
</dbReference>
<sequence>MRQRTIVCPLIQNDGCYLLCKMADNRGVFPGQWALSGGGVEPGERIEEALRREIREELGEQLILSDITPWTFRDDIRIKTYADGRQEEIYMIYLIFDCVSANRDICINDEFQDYAWVKPEELALYDLNVATRHTLALKGLL</sequence>
<protein>
    <recommendedName>
        <fullName evidence="1">Nucleoside triphosphatase NudI</fullName>
        <ecNumber evidence="1">3.6.1.9</ecNumber>
    </recommendedName>
    <alternativeName>
        <fullName evidence="1">Nucleotide diphosphatase NudI</fullName>
    </alternativeName>
    <alternativeName>
        <fullName evidence="1">Pyrimidine deoxynucleoside triphosphate diphosphatase</fullName>
    </alternativeName>
    <alternativeName>
        <fullName evidence="1">dCTP diphosphatase</fullName>
        <ecNumber evidence="1">3.6.1.12</ecNumber>
    </alternativeName>
    <alternativeName>
        <fullName evidence="1">dTTP diphosphatase</fullName>
        <ecNumber evidence="1">3.6.1.-</ecNumber>
    </alternativeName>
    <alternativeName>
        <fullName evidence="1">dUTP diphosphatase</fullName>
        <ecNumber evidence="1">3.6.1.23</ecNumber>
    </alternativeName>
</protein>